<organism>
    <name type="scientific">Cricetulus longicaudatus</name>
    <name type="common">Long-tailed dwarf hamster</name>
    <dbReference type="NCBI Taxonomy" id="10030"/>
    <lineage>
        <taxon>Eukaryota</taxon>
        <taxon>Metazoa</taxon>
        <taxon>Chordata</taxon>
        <taxon>Craniata</taxon>
        <taxon>Vertebrata</taxon>
        <taxon>Euteleostomi</taxon>
        <taxon>Mammalia</taxon>
        <taxon>Eutheria</taxon>
        <taxon>Euarchontoglires</taxon>
        <taxon>Glires</taxon>
        <taxon>Rodentia</taxon>
        <taxon>Myomorpha</taxon>
        <taxon>Muroidea</taxon>
        <taxon>Cricetidae</taxon>
        <taxon>Cricetinae</taxon>
        <taxon>Cricetulus</taxon>
    </lineage>
</organism>
<evidence type="ECO:0000250" key="1"/>
<evidence type="ECO:0000250" key="2">
    <source>
        <dbReference type="UniProtKB" id="P68431"/>
    </source>
</evidence>
<evidence type="ECO:0000250" key="3">
    <source>
        <dbReference type="UniProtKB" id="P68433"/>
    </source>
</evidence>
<evidence type="ECO:0000250" key="4">
    <source>
        <dbReference type="UniProtKB" id="P84227"/>
    </source>
</evidence>
<evidence type="ECO:0000250" key="5">
    <source>
        <dbReference type="UniProtKB" id="P84228"/>
    </source>
</evidence>
<evidence type="ECO:0000250" key="6">
    <source>
        <dbReference type="UniProtKB" id="P84243"/>
    </source>
</evidence>
<evidence type="ECO:0000250" key="7">
    <source>
        <dbReference type="UniProtKB" id="P84245"/>
    </source>
</evidence>
<evidence type="ECO:0000250" key="8">
    <source>
        <dbReference type="UniProtKB" id="Q71DI3"/>
    </source>
</evidence>
<evidence type="ECO:0000256" key="9">
    <source>
        <dbReference type="SAM" id="MobiDB-lite"/>
    </source>
</evidence>
<evidence type="ECO:0000305" key="10"/>
<accession>Q64400</accession>
<sequence>MARTKQTARKSTGGKAPRKQLATKAARKSAPATGGVKKPHRYRPGTVTLREIRRYQKSTELLIRKLPFQRLVREIAQDFKTDLRFQSSAVMALQEASEAYLVGLFEDTNLCAIHAKRVTIMPKDIQLARRIRGERA</sequence>
<proteinExistence type="evidence at transcript level"/>
<feature type="chain" id="PRO_0000253950" description="Histone H3.2">
    <location>
        <begin position="1"/>
        <end position="136"/>
    </location>
</feature>
<feature type="region of interest" description="Disordered" evidence="9">
    <location>
        <begin position="1"/>
        <end position="45"/>
    </location>
</feature>
<feature type="modified residue" description="Asymmetric dimethylarginine; by PRMT6; alternate" evidence="8">
    <location>
        <position position="3"/>
    </location>
</feature>
<feature type="modified residue" description="Citrulline; alternate" evidence="8">
    <location>
        <position position="3"/>
    </location>
</feature>
<feature type="modified residue" description="Phosphothreonine; by HASPIN and VRK1" evidence="8">
    <location>
        <position position="4"/>
    </location>
</feature>
<feature type="modified residue" description="Allysine; alternate" evidence="8">
    <location>
        <position position="5"/>
    </location>
</feature>
<feature type="modified residue" description="N6,N6,N6-trimethyllysine; alternate" evidence="8">
    <location>
        <position position="5"/>
    </location>
</feature>
<feature type="modified residue" description="N6,N6-dimethyllysine; alternate" evidence="8">
    <location>
        <position position="5"/>
    </location>
</feature>
<feature type="modified residue" description="N6-(2-hydroxyisobutyryl)lysine; alternate" evidence="2">
    <location>
        <position position="5"/>
    </location>
</feature>
<feature type="modified residue" description="N6-(beta-hydroxybutyryl)lysine; alternate" evidence="3">
    <location>
        <position position="5"/>
    </location>
</feature>
<feature type="modified residue" description="N6-acetyllysine; alternate" evidence="8">
    <location>
        <position position="5"/>
    </location>
</feature>
<feature type="modified residue" description="N6-crotonyllysine; alternate" evidence="8">
    <location>
        <position position="5"/>
    </location>
</feature>
<feature type="modified residue" description="N6-methyllysine; alternate" evidence="8">
    <location>
        <position position="5"/>
    </location>
</feature>
<feature type="modified residue" description="5-glutamyl dopamine; alternate" evidence="8">
    <location>
        <position position="6"/>
    </location>
</feature>
<feature type="modified residue" description="5-glutamyl serotonin; alternate" evidence="8">
    <location>
        <position position="6"/>
    </location>
</feature>
<feature type="modified residue" description="Phosphothreonine; by PKC" evidence="8">
    <location>
        <position position="7"/>
    </location>
</feature>
<feature type="modified residue" description="Citrulline; alternate" evidence="8">
    <location>
        <position position="9"/>
    </location>
</feature>
<feature type="modified residue" description="Symmetric dimethylarginine; by PRMT5; alternate" evidence="5">
    <location>
        <position position="9"/>
    </location>
</feature>
<feature type="modified residue" description="N6,N6,N6-trimethyllysine; alternate" evidence="8">
    <location>
        <position position="10"/>
    </location>
</feature>
<feature type="modified residue" description="N6,N6-dimethyllysine; alternate" evidence="8">
    <location>
        <position position="10"/>
    </location>
</feature>
<feature type="modified residue" description="N6-(2-hydroxyisobutyryl)lysine; alternate" evidence="2">
    <location>
        <position position="10"/>
    </location>
</feature>
<feature type="modified residue" description="N6-(beta-hydroxybutyryl)lysine; alternate" evidence="3">
    <location>
        <position position="10"/>
    </location>
</feature>
<feature type="modified residue" description="N6-acetyllysine; alternate" evidence="8">
    <location>
        <position position="10"/>
    </location>
</feature>
<feature type="modified residue" description="N6-crotonyllysine; alternate" evidence="8">
    <location>
        <position position="10"/>
    </location>
</feature>
<feature type="modified residue" description="N6-lactoyllysine; alternate" evidence="8">
    <location>
        <position position="10"/>
    </location>
</feature>
<feature type="modified residue" description="N6-methyllysine; alternate" evidence="8">
    <location>
        <position position="10"/>
    </location>
</feature>
<feature type="modified residue" description="ADP-ribosylserine; alternate" evidence="2">
    <location>
        <position position="11"/>
    </location>
</feature>
<feature type="modified residue" description="Phosphoserine; alternate; by AURKB, AURKC, RPS6KA3, RPS6KA4 and RPS6KA5" evidence="4">
    <location>
        <position position="11"/>
    </location>
</feature>
<feature type="modified residue" description="Phosphothreonine; by PKC" evidence="2">
    <location>
        <position position="12"/>
    </location>
</feature>
<feature type="modified residue" description="N6-(2-hydroxyisobutyryl)lysine; alternate" evidence="2">
    <location>
        <position position="15"/>
    </location>
</feature>
<feature type="modified residue" description="N6-(beta-hydroxybutyryl)lysine; alternate" evidence="3">
    <location>
        <position position="15"/>
    </location>
</feature>
<feature type="modified residue" description="N6-acetyllysine; alternate" evidence="8">
    <location>
        <position position="15"/>
    </location>
</feature>
<feature type="modified residue" description="N6-glutaryllysine; alternate" evidence="8">
    <location>
        <position position="15"/>
    </location>
</feature>
<feature type="modified residue" description="N6-lactoyllysine; alternate" evidence="5">
    <location>
        <position position="15"/>
    </location>
</feature>
<feature type="modified residue" description="N6-succinyllysine; alternate" evidence="8">
    <location>
        <position position="15"/>
    </location>
</feature>
<feature type="modified residue" description="Asymmetric dimethylarginine; by CARM1; alternate" evidence="8">
    <location>
        <position position="18"/>
    </location>
</feature>
<feature type="modified residue" description="Citrulline; alternate" evidence="8">
    <location>
        <position position="18"/>
    </location>
</feature>
<feature type="modified residue" description="N6-(2-hydroxyisobutyryl)lysine; alternate" evidence="2">
    <location>
        <position position="19"/>
    </location>
</feature>
<feature type="modified residue" description="N6-(beta-hydroxybutyryl)lysine; alternate" evidence="3">
    <location>
        <position position="19"/>
    </location>
</feature>
<feature type="modified residue" description="N6-acetyllysine; alternate" evidence="8">
    <location>
        <position position="19"/>
    </location>
</feature>
<feature type="modified residue" description="N6-butyryllysine; alternate" evidence="3">
    <location>
        <position position="19"/>
    </location>
</feature>
<feature type="modified residue" description="N6-crotonyllysine; alternate" evidence="8">
    <location>
        <position position="19"/>
    </location>
</feature>
<feature type="modified residue" description="N6-glutaryllysine; alternate" evidence="8">
    <location>
        <position position="19"/>
    </location>
</feature>
<feature type="modified residue" description="N6-lactoyllysine; alternate" evidence="8">
    <location>
        <position position="19"/>
    </location>
</feature>
<feature type="modified residue" description="N6-methyllysine; alternate" evidence="8">
    <location>
        <position position="19"/>
    </location>
</feature>
<feature type="modified residue" description="N6-(2-hydroxyisobutyryl)lysine; alternate" evidence="2">
    <location>
        <position position="24"/>
    </location>
</feature>
<feature type="modified residue" description="N6-(beta-hydroxybutyryl)lysine; alternate" evidence="3">
    <location>
        <position position="24"/>
    </location>
</feature>
<feature type="modified residue" description="N6-acetyllysine; alternate" evidence="8">
    <location>
        <position position="24"/>
    </location>
</feature>
<feature type="modified residue" description="N6-butyryllysine; alternate" evidence="3">
    <location>
        <position position="24"/>
    </location>
</feature>
<feature type="modified residue" description="N6-crotonyllysine; alternate" evidence="8">
    <location>
        <position position="24"/>
    </location>
</feature>
<feature type="modified residue" description="N6-glutaryllysine; alternate" evidence="8">
    <location>
        <position position="24"/>
    </location>
</feature>
<feature type="modified residue" description="N6-lactoyllysine; alternate" evidence="8">
    <location>
        <position position="24"/>
    </location>
</feature>
<feature type="modified residue" description="N6-methyllysine; alternate" evidence="8">
    <location>
        <position position="24"/>
    </location>
</feature>
<feature type="modified residue" description="Citrulline" evidence="8">
    <location>
        <position position="27"/>
    </location>
</feature>
<feature type="modified residue" description="N6,N6,N6-trimethyllysine; alternate" evidence="8">
    <location>
        <position position="28"/>
    </location>
</feature>
<feature type="modified residue" description="N6,N6-dimethyllysine; alternate" evidence="8">
    <location>
        <position position="28"/>
    </location>
</feature>
<feature type="modified residue" description="N6-(2-hydroxyisobutyryl)lysine; alternate" evidence="2">
    <location>
        <position position="28"/>
    </location>
</feature>
<feature type="modified residue" description="N6-acetyllysine; alternate" evidence="8">
    <location>
        <position position="28"/>
    </location>
</feature>
<feature type="modified residue" description="N6-crotonyllysine; alternate" evidence="8">
    <location>
        <position position="28"/>
    </location>
</feature>
<feature type="modified residue" description="N6-glutaryllysine; alternate" evidence="8">
    <location>
        <position position="28"/>
    </location>
</feature>
<feature type="modified residue" description="N6-lactoyllysine; alternate" evidence="8">
    <location>
        <position position="28"/>
    </location>
</feature>
<feature type="modified residue" description="N6-methyllysine; alternate" evidence="8">
    <location>
        <position position="28"/>
    </location>
</feature>
<feature type="modified residue" description="ADP-ribosylserine; alternate" evidence="2">
    <location>
        <position position="29"/>
    </location>
</feature>
<feature type="modified residue" description="Phosphoserine; alternate; by AURKB, AURKC and RPS6KA5" evidence="4">
    <location>
        <position position="29"/>
    </location>
</feature>
<feature type="modified residue" description="N6,N6,N6-trimethyllysine; alternate" evidence="8">
    <location>
        <position position="37"/>
    </location>
</feature>
<feature type="modified residue" description="N6,N6-dimethyllysine; alternate" evidence="8">
    <location>
        <position position="37"/>
    </location>
</feature>
<feature type="modified residue" description="N6-(2-hydroxyisobutyryl)lysine; alternate" evidence="2">
    <location>
        <position position="37"/>
    </location>
</feature>
<feature type="modified residue" description="N6-acetyllysine; alternate" evidence="8">
    <location>
        <position position="37"/>
    </location>
</feature>
<feature type="modified residue" description="N6-methyllysine; alternate" evidence="8">
    <location>
        <position position="37"/>
    </location>
</feature>
<feature type="modified residue" description="N6-methyllysine" evidence="2">
    <location>
        <position position="38"/>
    </location>
</feature>
<feature type="modified residue" description="Phosphotyrosine" evidence="8">
    <location>
        <position position="42"/>
    </location>
</feature>
<feature type="modified residue" description="N6,N6,N6-trimethyllysine; alternate" evidence="8">
    <location>
        <position position="57"/>
    </location>
</feature>
<feature type="modified residue" description="N6-(2-hydroxyisobutyryl)lysine; alternate" evidence="2">
    <location>
        <position position="57"/>
    </location>
</feature>
<feature type="modified residue" description="N6-(beta-hydroxybutyryl)lysine; alternate" evidence="3">
    <location>
        <position position="57"/>
    </location>
</feature>
<feature type="modified residue" description="N6-acetyllysine; alternate" evidence="8">
    <location>
        <position position="57"/>
    </location>
</feature>
<feature type="modified residue" description="N6-crotonyllysine; alternate" evidence="8">
    <location>
        <position position="57"/>
    </location>
</feature>
<feature type="modified residue" description="N6-glutaryllysine; alternate" evidence="8">
    <location>
        <position position="57"/>
    </location>
</feature>
<feature type="modified residue" description="N6-lactoyllysine; alternate" evidence="5">
    <location>
        <position position="57"/>
    </location>
</feature>
<feature type="modified residue" description="N6-methyllysine; by EHMT2; alternate" evidence="8">
    <location>
        <position position="57"/>
    </location>
</feature>
<feature type="modified residue" description="N6-succinyllysine; alternate" evidence="8">
    <location>
        <position position="57"/>
    </location>
</feature>
<feature type="modified residue" description="Phosphoserine" evidence="8">
    <location>
        <position position="58"/>
    </location>
</feature>
<feature type="modified residue" description="N6-(2-hydroxyisobutyryl)lysine; alternate" evidence="2">
    <location>
        <position position="65"/>
    </location>
</feature>
<feature type="modified residue" description="N6-methyllysine; alternate" evidence="8">
    <location>
        <position position="65"/>
    </location>
</feature>
<feature type="modified residue" description="N6,N6,N6-trimethyllysine; alternate" evidence="5">
    <location>
        <position position="80"/>
    </location>
</feature>
<feature type="modified residue" description="N6,N6-dimethyllysine; alternate" evidence="8">
    <location>
        <position position="80"/>
    </location>
</feature>
<feature type="modified residue" description="N6-(2-hydroxyisobutyryl)lysine; alternate" evidence="2">
    <location>
        <position position="80"/>
    </location>
</feature>
<feature type="modified residue" description="N6-acetyllysine; alternate" evidence="8">
    <location>
        <position position="80"/>
    </location>
</feature>
<feature type="modified residue" description="N6-glutaryllysine; alternate" evidence="8">
    <location>
        <position position="80"/>
    </location>
</feature>
<feature type="modified residue" description="N6-lactoyllysine; alternate" evidence="8">
    <location>
        <position position="80"/>
    </location>
</feature>
<feature type="modified residue" description="N6-methyllysine; alternate" evidence="8">
    <location>
        <position position="80"/>
    </location>
</feature>
<feature type="modified residue" description="N6-succinyllysine; alternate" evidence="8">
    <location>
        <position position="80"/>
    </location>
</feature>
<feature type="modified residue" description="Phosphothreonine" evidence="8">
    <location>
        <position position="81"/>
    </location>
</feature>
<feature type="modified residue" description="Phosphoserine" evidence="6">
    <location>
        <position position="87"/>
    </location>
</feature>
<feature type="modified residue" description="Phosphothreonine" evidence="8">
    <location>
        <position position="108"/>
    </location>
</feature>
<feature type="modified residue" description="N6-acetyllysine; alternate" evidence="8">
    <location>
        <position position="116"/>
    </location>
</feature>
<feature type="modified residue" description="N6-glutaryllysine; alternate" evidence="8">
    <location>
        <position position="116"/>
    </location>
</feature>
<feature type="modified residue" description="N6-(2-hydroxyisobutyryl)lysine; alternate" evidence="2">
    <location>
        <position position="123"/>
    </location>
</feature>
<feature type="modified residue" description="N6-acetyllysine; alternate" evidence="8">
    <location>
        <position position="123"/>
    </location>
</feature>
<feature type="modified residue" description="N6-glutaryllysine; alternate" evidence="8">
    <location>
        <position position="123"/>
    </location>
</feature>
<feature type="modified residue" description="N6-methyllysine; alternate" evidence="8">
    <location>
        <position position="123"/>
    </location>
</feature>
<feature type="modified residue" description="N6-succinyllysine; alternate" evidence="8">
    <location>
        <position position="123"/>
    </location>
</feature>
<feature type="lipid moiety-binding region" description="N6-decanoyllysine" evidence="8">
    <location>
        <position position="19"/>
    </location>
</feature>
<feature type="lipid moiety-binding region" description="S-palmitoyl cysteine" evidence="8">
    <location>
        <position position="111"/>
    </location>
</feature>
<dbReference type="EMBL" id="X80330">
    <property type="protein sequence ID" value="CAA56580.1"/>
    <property type="molecule type" value="Genomic_DNA"/>
</dbReference>
<dbReference type="PIR" id="I48092">
    <property type="entry name" value="I48092"/>
</dbReference>
<dbReference type="SMR" id="Q64400"/>
<dbReference type="GO" id="GO:0000786">
    <property type="term" value="C:nucleosome"/>
    <property type="evidence" value="ECO:0007669"/>
    <property type="project" value="UniProtKB-KW"/>
</dbReference>
<dbReference type="GO" id="GO:0005634">
    <property type="term" value="C:nucleus"/>
    <property type="evidence" value="ECO:0007669"/>
    <property type="project" value="UniProtKB-SubCell"/>
</dbReference>
<dbReference type="GO" id="GO:0003677">
    <property type="term" value="F:DNA binding"/>
    <property type="evidence" value="ECO:0007669"/>
    <property type="project" value="UniProtKB-KW"/>
</dbReference>
<dbReference type="GO" id="GO:0046982">
    <property type="term" value="F:protein heterodimerization activity"/>
    <property type="evidence" value="ECO:0007669"/>
    <property type="project" value="InterPro"/>
</dbReference>
<dbReference type="GO" id="GO:0030527">
    <property type="term" value="F:structural constituent of chromatin"/>
    <property type="evidence" value="ECO:0007669"/>
    <property type="project" value="InterPro"/>
</dbReference>
<dbReference type="CDD" id="cd22911">
    <property type="entry name" value="HFD_H3"/>
    <property type="match status" value="1"/>
</dbReference>
<dbReference type="FunFam" id="1.10.20.10:FF:000078">
    <property type="entry name" value="Histone H3"/>
    <property type="match status" value="1"/>
</dbReference>
<dbReference type="FunFam" id="1.10.20.10:FF:000044">
    <property type="entry name" value="Histone H3.3"/>
    <property type="match status" value="1"/>
</dbReference>
<dbReference type="Gene3D" id="1.10.20.10">
    <property type="entry name" value="Histone, subunit A"/>
    <property type="match status" value="1"/>
</dbReference>
<dbReference type="InterPro" id="IPR009072">
    <property type="entry name" value="Histone-fold"/>
</dbReference>
<dbReference type="InterPro" id="IPR007125">
    <property type="entry name" value="Histone_H2A/H2B/H3"/>
</dbReference>
<dbReference type="InterPro" id="IPR000164">
    <property type="entry name" value="Histone_H3/CENP-A"/>
</dbReference>
<dbReference type="PANTHER" id="PTHR11426">
    <property type="entry name" value="HISTONE H3"/>
    <property type="match status" value="1"/>
</dbReference>
<dbReference type="Pfam" id="PF00125">
    <property type="entry name" value="Histone"/>
    <property type="match status" value="1"/>
</dbReference>
<dbReference type="PRINTS" id="PR00622">
    <property type="entry name" value="HISTONEH3"/>
</dbReference>
<dbReference type="SMART" id="SM00428">
    <property type="entry name" value="H3"/>
    <property type="match status" value="1"/>
</dbReference>
<dbReference type="SUPFAM" id="SSF47113">
    <property type="entry name" value="Histone-fold"/>
    <property type="match status" value="1"/>
</dbReference>
<dbReference type="PROSITE" id="PS00322">
    <property type="entry name" value="HISTONE_H3_1"/>
    <property type="match status" value="1"/>
</dbReference>
<dbReference type="PROSITE" id="PS00959">
    <property type="entry name" value="HISTONE_H3_2"/>
    <property type="match status" value="1"/>
</dbReference>
<name>H32_CRILO</name>
<protein>
    <recommendedName>
        <fullName>Histone H3.2</fullName>
    </recommendedName>
</protein>
<reference key="1">
    <citation type="journal article" date="1994" name="Genetics">
        <title>Selection on silent sites in the rodent histone H3 gene family.</title>
        <authorList>
            <person name="DeBry R.W."/>
            <person name="Marzluff W.F."/>
        </authorList>
    </citation>
    <scope>NUCLEOTIDE SEQUENCE [GENOMIC DNA]</scope>
</reference>
<keyword id="KW-0007">Acetylation</keyword>
<keyword id="KW-0013">ADP-ribosylation</keyword>
<keyword id="KW-0158">Chromosome</keyword>
<keyword id="KW-0164">Citrullination</keyword>
<keyword id="KW-0238">DNA-binding</keyword>
<keyword id="KW-0379">Hydroxylation</keyword>
<keyword id="KW-0449">Lipoprotein</keyword>
<keyword id="KW-0488">Methylation</keyword>
<keyword id="KW-0544">Nucleosome core</keyword>
<keyword id="KW-0539">Nucleus</keyword>
<keyword id="KW-0564">Palmitate</keyword>
<keyword id="KW-0597">Phosphoprotein</keyword>
<keyword id="KW-0832">Ubl conjugation</keyword>
<comment type="function">
    <text>Core component of nucleosome. Nucleosomes wrap and compact DNA into chromatin, limiting DNA accessibility to the cellular machineries which require DNA as a template. Histones thereby play a central role in transcription regulation, DNA repair, DNA replication and chromosomal stability. DNA accessibility is regulated via a complex set of post-translational modifications of histones, also called histone code, and nucleosome remodeling.</text>
</comment>
<comment type="subunit">
    <text evidence="8">The nucleosome is a histone octamer containing two molecules each of H2A, H2B, H3 and H4 assembled in one H3-H4 heterotetramer and two H2A-H2B heterodimers (By similarity). The octamer wraps approximately 147 bp of DNA (By similarity). During nucleosome assembly the chaperone ASF1A interacts with the histone H3-H4 heterodimer (via C-terminus of H3); this interaction is direct (By similarity). Interacts with DNAJC9, CHAF1A and CHAF1B (By similarity). Interacts with NASP; NASP is a histone chaperone that stabilizes and maintains a soluble pool of Histone H3-H4 dimers (By similarity).</text>
</comment>
<comment type="subcellular location">
    <subcellularLocation>
        <location>Nucleus</location>
    </subcellularLocation>
    <subcellularLocation>
        <location>Chromosome</location>
    </subcellularLocation>
</comment>
<comment type="developmental stage">
    <text>Expressed during S phase, then expression strongly decreases as cell division slows down during the process of differentiation.</text>
</comment>
<comment type="PTM">
    <text evidence="8">Acetylation is generally linked to gene activation. Acetylation on Lys-10 (H3K9ac) impairs methylation at Arg-9 (H3R8me2s). Acetylation on Lys-19 (H3K18ac) and Lys-24 (H3K24ac) favors methylation at Arg-18 (H3R17me). Acetylation at Lys-123 (H3K122ac) by EP300/p300 plays a central role in chromatin structure: localizes at the surface of the histone octamer and stimulates transcription, possibly by promoting nucleosome instability.</text>
</comment>
<comment type="PTM">
    <text evidence="8">Citrullination at Arg-9 (H3R8ci) and/or Arg-18 (H3R17ci) by PADI4 impairs methylation and represses transcription.</text>
</comment>
<comment type="PTM">
    <text evidence="8">Asymmetric dimethylation at Arg-18 (H3R17me2a) by CARM1 is linked to gene activation. Symmetric dimethylation at Arg-9 (H3R8me2s) by PRMT5 is linked to gene repression. Asymmetric dimethylation at Arg-3 (H3R2me2a) by PRMT6 is linked to gene repression and is mutually exclusive with H3 Lys-5 methylation (H3K4me2 and H3K4me3). H3R2me2a is present at the 3' of genes regardless of their transcription state and is enriched on inactive promoters, while it is absent on active promoters.</text>
</comment>
<comment type="PTM">
    <text evidence="8">Methylation at Lys-5 (H3K4me), Lys-37 (H3K36me) and Lys-80 (H3K79me) are linked to gene activation. Methylation at Lys-5 (H3K4me) facilitates subsequent acetylation of H3 and H4. Methylation at Lys-80 (H3K79me) is associated with DNA double-strand break (DSB) responses and is a specific target for TP53BP1. Methylation at Lys-10 (H3K9me) and Lys-28 (H3K27me) are linked to gene repression. Methylation at Lys-10 (H3K9me) is a specific target for HP1 proteins (CBX1, CBX3 and CBX5) and prevents subsequent phosphorylation at Ser-11 (H3S10ph) and acetylation of H3 and H4. Methylation at Lys-5 (H3K4me) and Lys-80 (H3K79me) require preliminary monoubiquitination of H2B at 'Lys-120'. Methylation at Lys-10 (H3K9me) and Lys-28 (H3K27me) are enriched in inactive X chromosome chromatin. Monomethylation at Lys-57 (H3K56me1) by EHMT2/G9A in G1 phase promotes interaction with PCNA and is required for DNA replication.</text>
</comment>
<comment type="PTM">
    <text evidence="8">Phosphorylated at Thr-4 (H3T3ph) by VRK1 (By similarity). Phosphorylated at Thr-4 (H3T3ph) by HASPIN during prophase and dephosphorylated during anaphase. Phosphorylation at Ser-11 (H3S10ph) by AURKB is crucial for chromosome condensation and cell-cycle progression during mitosis and meiosis. In addition phosphorylation at Ser-11 (H3S10ph) by RPS6KA4 and RPS6KA5 is important during interphase because it enables the transcription of genes following external stimulation, like mitogens, stress, growth factors or UV irradiation and result in the activation of genes, such as c-fos and c-jun. Phosphorylation at Ser-11 (H3S10ph), which is linked to gene activation, prevents methylation at Lys-10 (H3K9me) but facilitates acetylation of H3 and H4. Phosphorylation at Ser-11 (H3S10ph) by AURKB mediates the dissociation of HP1 proteins (CBX1, CBX3 and CBX5) from heterochromatin. Phosphorylation at Ser-11 (H3S10ph) is also an essential regulatory mechanism for neoplastic cell transformation. Phosphorylated at Ser-29 (H3S28ph) by MAP3K20 isoform 1, RPS6KA5 or AURKB during mitosis or upon ultraviolet B irradiation. Phosphorylation at Thr-7 (H3T6ph) by PRKCB is a specific tag for epigenetic transcriptional activation that prevents demethylation of Lys-5 (H3K4me) by LSD1/KDM1A. At centromeres, specifically phosphorylated at Thr-12 (H3T11ph) from prophase to early anaphase, by DAPK3 and PKN1. Phosphorylation at Thr-12 (H3T11ph) by PKN1 or isoform M2 of PKM (PKM2) is a specific tag for epigenetic transcriptional activation that promotes demethylation of Lys-10 (H3K9me) by KDM4C/JMJD2C. Phosphorylation at Tyr-42 (H3Y41ph) by JAK2 promotes exclusion of CBX5 (HP1 alpha) from chromatin.</text>
</comment>
<comment type="PTM">
    <text evidence="1 8">Monoubiquitinated by RAG1 in lymphoid cells, monoubiquitination is required for V(D)J recombination (By similarity). Ubiquitinated by the CUL4-DDB-RBX1 complex in response to ultraviolet irradiation. This may weaken the interaction between histones and DNA and facilitate DNA accessibility to repair proteins (By similarity).</text>
</comment>
<comment type="PTM">
    <text evidence="8">Lysine deamination at Lys-5 (H3K4all) to form allysine is mediated by LOXL2. Allysine formation by LOXL2 only takes place on H3K4me3 and results in gene repression.</text>
</comment>
<comment type="PTM">
    <text evidence="8">Crotonylation (Kcr) is specifically present in male germ cells and marks testis-specific genes in post-meiotic cells, including X-linked genes that escape sex chromosome inactivation in haploid cells. Crotonylation marks active promoters and enhancers and confers resistance to transcriptional repressors. It is also associated with post-meiotically activated genes on autosomes.</text>
</comment>
<comment type="PTM">
    <text evidence="3">Butyrylation of histones marks active promoters and competes with histone acetylation. It is present during late spermatogenesis.</text>
</comment>
<comment type="PTM">
    <text evidence="8">Succinylation at Lys-80 (H3K79succ) by KAT2A takes place with a maximum frequency around the transcription start sites of genes. It gives a specific tag for epigenetic transcription activation. Desuccinylation at Lys-123 (H3K122succ) by SIRT7 in response to DNA damage promotes chromatin condensation and double-strand breaks (DSBs) repair.</text>
</comment>
<comment type="PTM">
    <text evidence="2">Serine ADP-ribosylation by PARP1 or PARP2 constitutes the primary form of ADP-ribosylation of proteins in response to DNA damage. Serine ADP-ribosylation at Ser-11 (H3S10ADPr) promotes recruitment of CHD1L. H3S10ADPr is mutually exclusive with phosphorylation at Ser-11 (H3S10ph) and impairs acetylation at Lys-10 (H3K9ac).</text>
</comment>
<comment type="PTM">
    <text evidence="8">Serotonylated by TGM2 at Gln-6 (H3Q5ser) during serotonergic neuron differentiation (By similarity). H3Q5ser is associated with trimethylation of Lys-5 (H3K4me3) and enhances general transcription factor IID (TFIID) complex-binding to H3K4me3, thereby facilitating transcription (By similarity).</text>
</comment>
<comment type="PTM">
    <text evidence="7 8">Dopaminylated by TGM2 at Gln-6 (H3Q5dop) in ventral tegmental area (VTA) neurons (By similarity). H3Q5dop mediates neurotransmission-independent role of nuclear dopamine by regulating relapse-related transcriptional plasticity in the reward system (By similarity).</text>
</comment>
<comment type="PTM">
    <text evidence="8">Lactylated in macrophages by EP300/P300 by using lactoyl-CoA directly derived from endogenous or exogenous lactate, leading to stimulates gene transcription.</text>
</comment>
<comment type="similarity">
    <text evidence="10">Belongs to the histone H3 family.</text>
</comment>